<dbReference type="EMBL" id="CY021053">
    <property type="protein sequence ID" value="ABO52280.1"/>
    <property type="molecule type" value="Viral_cRNA"/>
</dbReference>
<dbReference type="SMR" id="A4K143"/>
<dbReference type="GlyCosmos" id="A4K143">
    <property type="glycosylation" value="8 sites, No reported glycans"/>
</dbReference>
<dbReference type="PRO" id="PR:A4K143"/>
<dbReference type="Proteomes" id="UP000008219">
    <property type="component" value="Genome"/>
</dbReference>
<dbReference type="GO" id="GO:0020002">
    <property type="term" value="C:host cell plasma membrane"/>
    <property type="evidence" value="ECO:0007669"/>
    <property type="project" value="UniProtKB-SubCell"/>
</dbReference>
<dbReference type="GO" id="GO:0016020">
    <property type="term" value="C:membrane"/>
    <property type="evidence" value="ECO:0007669"/>
    <property type="project" value="UniProtKB-UniRule"/>
</dbReference>
<dbReference type="GO" id="GO:0019031">
    <property type="term" value="C:viral envelope"/>
    <property type="evidence" value="ECO:0007669"/>
    <property type="project" value="UniProtKB-UniRule"/>
</dbReference>
<dbReference type="GO" id="GO:0055036">
    <property type="term" value="C:virion membrane"/>
    <property type="evidence" value="ECO:0007669"/>
    <property type="project" value="UniProtKB-SubCell"/>
</dbReference>
<dbReference type="GO" id="GO:0046789">
    <property type="term" value="F:host cell surface receptor binding"/>
    <property type="evidence" value="ECO:0007669"/>
    <property type="project" value="UniProtKB-UniRule"/>
</dbReference>
<dbReference type="GO" id="GO:0075512">
    <property type="term" value="P:clathrin-dependent endocytosis of virus by host cell"/>
    <property type="evidence" value="ECO:0007669"/>
    <property type="project" value="UniProtKB-UniRule"/>
</dbReference>
<dbReference type="GO" id="GO:0039654">
    <property type="term" value="P:fusion of virus membrane with host endosome membrane"/>
    <property type="evidence" value="ECO:0007669"/>
    <property type="project" value="UniProtKB-UniRule"/>
</dbReference>
<dbReference type="GO" id="GO:0019064">
    <property type="term" value="P:fusion of virus membrane with host plasma membrane"/>
    <property type="evidence" value="ECO:0007669"/>
    <property type="project" value="InterPro"/>
</dbReference>
<dbReference type="GO" id="GO:0046761">
    <property type="term" value="P:viral budding from plasma membrane"/>
    <property type="evidence" value="ECO:0007669"/>
    <property type="project" value="UniProtKB-UniRule"/>
</dbReference>
<dbReference type="GO" id="GO:0019062">
    <property type="term" value="P:virion attachment to host cell"/>
    <property type="evidence" value="ECO:0007669"/>
    <property type="project" value="UniProtKB-KW"/>
</dbReference>
<dbReference type="FunFam" id="3.90.20.10:FF:000002">
    <property type="entry name" value="Hemagglutinin"/>
    <property type="match status" value="1"/>
</dbReference>
<dbReference type="Gene3D" id="3.90.20.10">
    <property type="match status" value="1"/>
</dbReference>
<dbReference type="Gene3D" id="3.90.209.20">
    <property type="match status" value="1"/>
</dbReference>
<dbReference type="Gene3D" id="2.10.77.10">
    <property type="entry name" value="Hemagglutinin Chain A, Domain 2"/>
    <property type="match status" value="1"/>
</dbReference>
<dbReference type="HAMAP" id="MF_04072">
    <property type="entry name" value="INFV_HEMA"/>
    <property type="match status" value="1"/>
</dbReference>
<dbReference type="InterPro" id="IPR008980">
    <property type="entry name" value="Capsid_hemagglutn"/>
</dbReference>
<dbReference type="InterPro" id="IPR013828">
    <property type="entry name" value="Hemagglutn_HA1_a/b_dom_sf"/>
</dbReference>
<dbReference type="InterPro" id="IPR000149">
    <property type="entry name" value="Hemagglutn_influenz_A"/>
</dbReference>
<dbReference type="InterPro" id="IPR001364">
    <property type="entry name" value="Hemagglutn_influenz_A/B"/>
</dbReference>
<dbReference type="Pfam" id="PF00509">
    <property type="entry name" value="Hemagglutinin"/>
    <property type="match status" value="1"/>
</dbReference>
<dbReference type="PRINTS" id="PR00330">
    <property type="entry name" value="HEMAGGLUTN1"/>
</dbReference>
<dbReference type="PRINTS" id="PR00329">
    <property type="entry name" value="HEMAGGLUTN12"/>
</dbReference>
<dbReference type="SUPFAM" id="SSF58064">
    <property type="entry name" value="Influenza hemagglutinin (stalk)"/>
    <property type="match status" value="1"/>
</dbReference>
<dbReference type="SUPFAM" id="SSF49818">
    <property type="entry name" value="Viral protein domain"/>
    <property type="match status" value="1"/>
</dbReference>
<gene>
    <name evidence="2" type="primary">HA</name>
</gene>
<feature type="signal peptide" evidence="2">
    <location>
        <begin position="1"/>
        <end position="17"/>
    </location>
</feature>
<feature type="chain" id="PRO_0000440387" description="Hemagglutinin" evidence="2">
    <location>
        <begin position="18"/>
        <end position="566"/>
    </location>
</feature>
<feature type="chain" id="PRO_0000372885" description="Hemagglutinin HA1 chain" evidence="2">
    <location>
        <begin position="18"/>
        <end position="343"/>
    </location>
</feature>
<feature type="chain" id="PRO_0000372886" description="Hemagglutinin HA2 chain" evidence="2">
    <location>
        <begin position="345"/>
        <end position="566"/>
    </location>
</feature>
<feature type="topological domain" description="Extracellular" evidence="2">
    <location>
        <begin position="18"/>
        <end position="529"/>
    </location>
</feature>
<feature type="transmembrane region" description="Helical" evidence="2">
    <location>
        <begin position="530"/>
        <end position="550"/>
    </location>
</feature>
<feature type="topological domain" description="Cytoplasmic" evidence="2">
    <location>
        <begin position="551"/>
        <end position="566"/>
    </location>
</feature>
<feature type="site" description="Cleavage; by host" evidence="2">
    <location>
        <begin position="344"/>
        <end position="345"/>
    </location>
</feature>
<feature type="lipid moiety-binding region" description="S-palmitoyl cysteine; by host" evidence="2">
    <location>
        <position position="555"/>
    </location>
</feature>
<feature type="lipid moiety-binding region" description="S-palmitoyl cysteine; by host" evidence="2">
    <location>
        <position position="562"/>
    </location>
</feature>
<feature type="lipid moiety-binding region" description="S-palmitoyl cysteine; by host" evidence="2">
    <location>
        <position position="565"/>
    </location>
</feature>
<feature type="glycosylation site" description="N-linked (GlcNAc...) asparagine; by host" evidence="2">
    <location>
        <position position="27"/>
    </location>
</feature>
<feature type="glycosylation site" description="N-linked (GlcNAc...) asparagine; by host" evidence="2">
    <location>
        <position position="28"/>
    </location>
</feature>
<feature type="glycosylation site" description="N-linked (GlcNAc...) asparagine; by host" evidence="2">
    <location>
        <position position="40"/>
    </location>
</feature>
<feature type="glycosylation site" description="N-linked (GlcNAc...) asparagine; by host" evidence="2">
    <location>
        <position position="90"/>
    </location>
</feature>
<feature type="glycosylation site" description="N-linked (GlcNAc...) asparagine; by host" evidence="2">
    <location>
        <position position="144"/>
    </location>
</feature>
<feature type="glycosylation site" description="N-linked (GlcNAc...) asparagine; by host" evidence="2">
    <location>
        <position position="286"/>
    </location>
</feature>
<feature type="glycosylation site" description="N-linked (GlcNAc...) asparagine; by host" evidence="2">
    <location>
        <position position="304"/>
    </location>
</feature>
<feature type="glycosylation site" description="N-linked (GlcNAc...) asparagine; by host" evidence="2">
    <location>
        <position position="498"/>
    </location>
</feature>
<feature type="disulfide bond" description="Interchain (between HA1 and HA2 chains)" evidence="2">
    <location>
        <begin position="21"/>
        <end position="481"/>
    </location>
</feature>
<feature type="disulfide bond" evidence="2">
    <location>
        <begin position="59"/>
        <end position="292"/>
    </location>
</feature>
<feature type="disulfide bond" evidence="2">
    <location>
        <begin position="72"/>
        <end position="84"/>
    </location>
</feature>
<feature type="disulfide bond" evidence="2">
    <location>
        <begin position="107"/>
        <end position="153"/>
    </location>
</feature>
<feature type="disulfide bond" evidence="2">
    <location>
        <begin position="296"/>
        <end position="320"/>
    </location>
</feature>
<feature type="disulfide bond" evidence="2">
    <location>
        <begin position="488"/>
        <end position="492"/>
    </location>
</feature>
<protein>
    <recommendedName>
        <fullName evidence="2">Hemagglutinin</fullName>
    </recommendedName>
    <component>
        <recommendedName>
            <fullName evidence="2">Hemagglutinin HA1 chain</fullName>
        </recommendedName>
    </component>
    <component>
        <recommendedName>
            <fullName evidence="2">Hemagglutinin HA2 chain</fullName>
        </recommendedName>
    </component>
</protein>
<comment type="function">
    <text evidence="2">Binds to sialic acid-containing receptors on the cell surface, bringing about the attachment of the virus particle to the cell. This attachment induces virion internalization either through clathrin-dependent endocytosis or through clathrin- and caveolin-independent pathway. Plays a major role in the determination of host range restriction and virulence. Class I viral fusion protein. Responsible for penetration of the virus into the cell cytoplasm by mediating the fusion of the membrane of the endocytosed virus particle with the endosomal membrane. Low pH in endosomes induces an irreversible conformational change in HA2, releasing the fusion hydrophobic peptide. Several trimers are required to form a competent fusion pore.</text>
</comment>
<comment type="subunit">
    <text evidence="1">Homotrimer of disulfide-linked HA1-HA2. Interacts with human CACNA1C.</text>
</comment>
<comment type="subcellular location">
    <subcellularLocation>
        <location evidence="2">Virion membrane</location>
        <topology evidence="2">Single-pass type I membrane protein</topology>
    </subcellularLocation>
    <subcellularLocation>
        <location evidence="2">Host apical cell membrane</location>
        <topology evidence="2">Single-pass type I membrane protein</topology>
    </subcellularLocation>
    <text evidence="2">Targeted to the apical plasma membrane in epithelial polarized cells through a signal present in the transmembrane domain. Associated with glycosphingolipid- and cholesterol-enriched detergent-resistant lipid rafts.</text>
</comment>
<comment type="PTM">
    <text evidence="2">Palmitoylated.</text>
</comment>
<comment type="PTM">
    <text evidence="2">In natural infection, inactive HA is matured into HA1 and HA2 outside the cell by one or more trypsin-like, arginine-specific endoprotease secreted by the bronchial epithelial cells. One identified protease that may be involved in this process is secreted in lungs by club cells.</text>
</comment>
<comment type="miscellaneous">
    <text>Major glycoprotein, comprises over 80% of the envelope proteins present in virus particle.</text>
</comment>
<comment type="miscellaneous">
    <text>The extent of infection into host organism is determined by HA. Influenza viruses bud from the apical surface of polarized epithelial cells (e.g. bronchial epithelial cells) into lumen of lungs and are therefore usually pneumotropic. The reason is that HA is cleaved by tryptase clara which is restricted to lungs. However, HAs of H5 and H7 pantropic avian viruses subtypes can be cleaved by furin and subtilisin-type enzymes, allowing the virus to grow in other organs than lungs.</text>
</comment>
<comment type="miscellaneous">
    <text evidence="3">The influenza A genome consist of 8 RNA segments. Genetic variation of hemagglutinin and/or neuraminidase genes results in the emergence of new influenza strains. The mechanism of variation can be the result of point mutations or the result of genetic reassortment between segments of two different strains.</text>
</comment>
<comment type="similarity">
    <text evidence="2">Belongs to the influenza viruses hemagglutinin family.</text>
</comment>
<evidence type="ECO:0000250" key="1">
    <source>
        <dbReference type="UniProtKB" id="Q289M7"/>
    </source>
</evidence>
<evidence type="ECO:0000255" key="2">
    <source>
        <dbReference type="HAMAP-Rule" id="MF_04072"/>
    </source>
</evidence>
<evidence type="ECO:0000305" key="3"/>
<sequence>MKARLLILLCALSATDADTICIGYHANNSTDTVDTVLEKNVTVTHSVNLLEDSHNGKLCRLKGIAPLQLGKCNIAGWILGNPECESLLSNRSWSYIAETPNSENGICYPGDFADYEELREQLSSVSSFERFEIFPKESSWPKHNITRGVTVACSHAKKSSFYKNLLWLTEANGLYPSLSKSYVNDREKEVLVLWGVHHPSNIEDQRTLYRKENAYVSVVSSNYNRRFTPEIAERPKVRGQPGRMNYYWTLLEPGDKIIFEANGNLIAPWYAFALSRGPGSGIITSNASMDECDTKCQTPQGAINSSLPFQNIHPVTIGECPKYVRSTKLRMVTGLRNIPSIQSRGLFGAIAGFIEGGWTGMVDGWYGYHHQNEQGSGYAADQKSTQNAINGITNKVNSVIEKMNTQFTAVGKEFNKLEKRMENLNKKVDDGFLDIWTYNAELLVLLENERTLDFHDSNVKNLYEKVKNQLRNNAKEIGNGCFEFYHKCDNECMESVKNGTYDYPKYSEESKLNRAKIDGVKLESMGVYQILAIYSTVASSLVLLVSLGAISFWMCSNGSLQCRICI</sequence>
<proteinExistence type="inferred from homology"/>
<accession>A4K143</accession>
<organismHost>
    <name type="scientific">Aves</name>
    <dbReference type="NCBI Taxonomy" id="8782"/>
</organismHost>
<organismHost>
    <name type="scientific">Homo sapiens</name>
    <name type="common">Human</name>
    <dbReference type="NCBI Taxonomy" id="9606"/>
</organismHost>
<organismHost>
    <name type="scientific">Sus scrofa</name>
    <name type="common">Pig</name>
    <dbReference type="NCBI Taxonomy" id="9823"/>
</organismHost>
<keyword id="KW-1167">Clathrin- and caveolin-independent endocytosis of virus by host</keyword>
<keyword id="KW-1165">Clathrin-mediated endocytosis of virus by host</keyword>
<keyword id="KW-1015">Disulfide bond</keyword>
<keyword id="KW-1170">Fusion of virus membrane with host endosomal membrane</keyword>
<keyword id="KW-1168">Fusion of virus membrane with host membrane</keyword>
<keyword id="KW-0325">Glycoprotein</keyword>
<keyword id="KW-0348">Hemagglutinin</keyword>
<keyword id="KW-1032">Host cell membrane</keyword>
<keyword id="KW-1043">Host membrane</keyword>
<keyword id="KW-0945">Host-virus interaction</keyword>
<keyword id="KW-0449">Lipoprotein</keyword>
<keyword id="KW-0472">Membrane</keyword>
<keyword id="KW-0564">Palmitate</keyword>
<keyword id="KW-0732">Signal</keyword>
<keyword id="KW-0812">Transmembrane</keyword>
<keyword id="KW-1133">Transmembrane helix</keyword>
<keyword id="KW-1161">Viral attachment to host cell</keyword>
<keyword id="KW-0261">Viral envelope protein</keyword>
<keyword id="KW-1162">Viral penetration into host cytoplasm</keyword>
<keyword id="KW-0946">Virion</keyword>
<keyword id="KW-1164">Virus endocytosis by host</keyword>
<keyword id="KW-1160">Virus entry into host cell</keyword>
<reference key="1">
    <citation type="submission" date="2007-03" db="EMBL/GenBank/DDBJ databases">
        <title>The NIAID influenza genome sequencing project.</title>
        <authorList>
            <person name="Ghedin E."/>
            <person name="Spiro D."/>
            <person name="Miller N."/>
            <person name="Zaborsky J."/>
            <person name="Feldblyum T."/>
            <person name="Subbu V."/>
            <person name="Shumway M."/>
            <person name="Sparenborg J."/>
            <person name="Groveman L."/>
            <person name="Halpin R."/>
            <person name="Sitz J."/>
            <person name="Koo H."/>
            <person name="Salzberg S.L."/>
            <person name="Webster R.G."/>
            <person name="Hoffmann E."/>
            <person name="Krauss S."/>
            <person name="Naeve C."/>
            <person name="Bao Y."/>
            <person name="Bolotov P."/>
            <person name="Dernovoy D."/>
            <person name="Kiryutin B."/>
            <person name="Lipman D.J."/>
            <person name="Tatusova T."/>
        </authorList>
    </citation>
    <scope>NUCLEOTIDE SEQUENCE [GENOMIC RNA]</scope>
</reference>
<reference key="2">
    <citation type="submission" date="2007-03" db="EMBL/GenBank/DDBJ databases">
        <authorList>
            <consortium name="The NIAID Influenza Genome Sequencing Consortium"/>
        </authorList>
    </citation>
    <scope>NUCLEOTIDE SEQUENCE [GENOMIC RNA]</scope>
</reference>
<organism>
    <name type="scientific">Influenza A virus (strain A/Malaysia:Malaya/302/1954 H1N1)</name>
    <dbReference type="NCBI Taxonomy" id="425566"/>
    <lineage>
        <taxon>Viruses</taxon>
        <taxon>Riboviria</taxon>
        <taxon>Orthornavirae</taxon>
        <taxon>Negarnaviricota</taxon>
        <taxon>Polyploviricotina</taxon>
        <taxon>Insthoviricetes</taxon>
        <taxon>Articulavirales</taxon>
        <taxon>Orthomyxoviridae</taxon>
        <taxon>Alphainfluenzavirus</taxon>
        <taxon>Alphainfluenzavirus influenzae</taxon>
        <taxon>Influenza A virus</taxon>
    </lineage>
</organism>
<name>HEMA_I54A2</name>